<evidence type="ECO:0000269" key="1">
    <source ref="2"/>
</evidence>
<evidence type="ECO:0000305" key="2"/>
<evidence type="ECO:0007829" key="3">
    <source>
        <dbReference type="PDB" id="1SGJ"/>
    </source>
</evidence>
<name>CITEL_DEIRA</name>
<reference key="1">
    <citation type="journal article" date="1999" name="Science">
        <title>Genome sequence of the radioresistant bacterium Deinococcus radiodurans R1.</title>
        <authorList>
            <person name="White O."/>
            <person name="Eisen J.A."/>
            <person name="Heidelberg J.F."/>
            <person name="Hickey E.K."/>
            <person name="Peterson J.D."/>
            <person name="Dodson R.J."/>
            <person name="Haft D.H."/>
            <person name="Gwinn M.L."/>
            <person name="Nelson W.C."/>
            <person name="Richardson D.L."/>
            <person name="Moffat K.S."/>
            <person name="Qin H."/>
            <person name="Jiang L."/>
            <person name="Pamphile W."/>
            <person name="Crosby M."/>
            <person name="Shen M."/>
            <person name="Vamathevan J.J."/>
            <person name="Lam P."/>
            <person name="McDonald L.A."/>
            <person name="Utterback T.R."/>
            <person name="Zalewski C."/>
            <person name="Makarova K.S."/>
            <person name="Aravind L."/>
            <person name="Daly M.J."/>
            <person name="Minton K.W."/>
            <person name="Fleischmann R.D."/>
            <person name="Ketchum K.A."/>
            <person name="Nelson K.E."/>
            <person name="Salzberg S.L."/>
            <person name="Smith H.O."/>
            <person name="Venter J.C."/>
            <person name="Fraser C.M."/>
        </authorList>
    </citation>
    <scope>NUCLEOTIDE SEQUENCE [LARGE SCALE GENOMIC DNA]</scope>
    <source>
        <strain>ATCC 13939 / DSM 20539 / JCM 16871 / CCUG 27074 / LMG 4051 / NBRC 15346 / NCIMB 9279 / VKM B-1422 / R1</strain>
    </source>
</reference>
<reference key="2">
    <citation type="submission" date="2005-01" db="PDB data bank">
        <title>Crystal structure of citrate lyase beta subunit.</title>
        <authorList>
            <consortium name="New York structural genomics research consortium (NYSGRC)"/>
        </authorList>
    </citation>
    <scope>X-RAY CRYSTALLOGRAPHY (1.84 ANGSTROMS) IN COMPLEX WITH MAGNESIUM IONS AND SUBSTRATE ANALOG</scope>
    <scope>SUBUNIT</scope>
    <scope>COFACTOR</scope>
</reference>
<accession>Q9RUZ0</accession>
<gene>
    <name type="ordered locus">DR_1240</name>
</gene>
<comment type="function">
    <text evidence="2">May play a role in fatty acid biosynthesis.</text>
</comment>
<comment type="cofactor">
    <cofactor evidence="1">
        <name>Mg(2+)</name>
        <dbReference type="ChEBI" id="CHEBI:18420"/>
    </cofactor>
    <text evidence="1">Binds 1 Mg(2+) ion per subunit.</text>
</comment>
<comment type="subunit">
    <text evidence="1">Homotrimer.</text>
</comment>
<comment type="similarity">
    <text evidence="2">Belongs to the HpcH/HpaI aldolase family. Citrate lyase beta subunit-like subfamily.</text>
</comment>
<comment type="caution">
    <text evidence="2">This organism lacks the other subunits that are necessary for ATP-independent citrate lyase activity. Even though this protein has clear similarity to citrate lyase beta subunit, it is expected to have a somewhat different enzyme activity.</text>
</comment>
<sequence>MNAPPALLRSVLFAPGNRADLIAKLPRSAPDAVVIDLEDAVPGTAEAKAAARPVAHDAARDLIAAAPHLAVFVRVNALHSPYFEDDLSVLTPELSGVVVPKLEMGAEARQVAQMLQERSLPLPILAGLETGAGVWNAREIMEVPEVAWAYFGAEDYTTDLGGKRTPGGLEVLYARSQVALAARLTGVAALDIVVTALNDPETFRADAEQGRALGYSGKLCIHPAQVALAHEYFGPTEADRARARALLDAAAAAAQRGHGAFSFEGQMVDEPMLAKARTLLSHEA</sequence>
<feature type="chain" id="PRO_0000286387" description="Citrate lyase subunit beta-like protein">
    <location>
        <begin position="1"/>
        <end position="284"/>
    </location>
</feature>
<feature type="binding site" evidence="1">
    <location>
        <position position="74"/>
    </location>
    <ligand>
        <name>substrate</name>
    </ligand>
</feature>
<feature type="binding site" evidence="1">
    <location>
        <position position="129"/>
    </location>
    <ligand>
        <name>Mg(2+)</name>
        <dbReference type="ChEBI" id="CHEBI:18420"/>
    </ligand>
</feature>
<feature type="binding site" evidence="1">
    <location>
        <position position="129"/>
    </location>
    <ligand>
        <name>substrate</name>
    </ligand>
</feature>
<feature type="binding site" evidence="1">
    <location>
        <position position="155"/>
    </location>
    <ligand>
        <name>Mg(2+)</name>
        <dbReference type="ChEBI" id="CHEBI:18420"/>
    </ligand>
</feature>
<feature type="strand" evidence="3">
    <location>
        <begin position="9"/>
        <end position="15"/>
    </location>
</feature>
<feature type="helix" evidence="3">
    <location>
        <begin position="19"/>
        <end position="24"/>
    </location>
</feature>
<feature type="turn" evidence="3">
    <location>
        <begin position="25"/>
        <end position="28"/>
    </location>
</feature>
<feature type="strand" evidence="3">
    <location>
        <begin position="31"/>
        <end position="38"/>
    </location>
</feature>
<feature type="helix" evidence="3">
    <location>
        <begin position="45"/>
        <end position="65"/>
    </location>
</feature>
<feature type="strand" evidence="3">
    <location>
        <begin position="69"/>
        <end position="74"/>
    </location>
</feature>
<feature type="helix" evidence="3">
    <location>
        <begin position="83"/>
        <end position="86"/>
    </location>
</feature>
<feature type="helix" evidence="3">
    <location>
        <begin position="87"/>
        <end position="89"/>
    </location>
</feature>
<feature type="strand" evidence="3">
    <location>
        <begin position="94"/>
        <end position="99"/>
    </location>
</feature>
<feature type="helix" evidence="3">
    <location>
        <begin position="105"/>
        <end position="117"/>
    </location>
</feature>
<feature type="strand" evidence="3">
    <location>
        <begin position="124"/>
        <end position="128"/>
    </location>
</feature>
<feature type="helix" evidence="3">
    <location>
        <begin position="131"/>
        <end position="135"/>
    </location>
</feature>
<feature type="helix" evidence="3">
    <location>
        <begin position="137"/>
        <end position="141"/>
    </location>
</feature>
<feature type="strand" evidence="3">
    <location>
        <begin position="146"/>
        <end position="151"/>
    </location>
</feature>
<feature type="helix" evidence="3">
    <location>
        <begin position="153"/>
        <end position="160"/>
    </location>
</feature>
<feature type="helix" evidence="3">
    <location>
        <begin position="169"/>
        <end position="171"/>
    </location>
</feature>
<feature type="helix" evidence="3">
    <location>
        <begin position="172"/>
        <end position="185"/>
    </location>
</feature>
<feature type="strand" evidence="3">
    <location>
        <begin position="188"/>
        <end position="191"/>
    </location>
</feature>
<feature type="helix" evidence="3">
    <location>
        <begin position="200"/>
        <end position="212"/>
    </location>
</feature>
<feature type="strand" evidence="3">
    <location>
        <begin position="216"/>
        <end position="222"/>
    </location>
</feature>
<feature type="helix" evidence="3">
    <location>
        <begin position="223"/>
        <end position="230"/>
    </location>
</feature>
<proteinExistence type="evidence at protein level"/>
<organism>
    <name type="scientific">Deinococcus radiodurans (strain ATCC 13939 / DSM 20539 / JCM 16871 / CCUG 27074 / LMG 4051 / NBRC 15346 / NCIMB 9279 / VKM B-1422 / R1)</name>
    <dbReference type="NCBI Taxonomy" id="243230"/>
    <lineage>
        <taxon>Bacteria</taxon>
        <taxon>Thermotogati</taxon>
        <taxon>Deinococcota</taxon>
        <taxon>Deinococci</taxon>
        <taxon>Deinococcales</taxon>
        <taxon>Deinococcaceae</taxon>
        <taxon>Deinococcus</taxon>
    </lineage>
</organism>
<protein>
    <recommendedName>
        <fullName>Citrate lyase subunit beta-like protein</fullName>
        <ecNumber>4.1.-.-</ecNumber>
    </recommendedName>
</protein>
<keyword id="KW-0002">3D-structure</keyword>
<keyword id="KW-0456">Lyase</keyword>
<keyword id="KW-0460">Magnesium</keyword>
<keyword id="KW-0479">Metal-binding</keyword>
<keyword id="KW-1185">Reference proteome</keyword>
<dbReference type="EC" id="4.1.-.-"/>
<dbReference type="EMBL" id="AE000513">
    <property type="protein sequence ID" value="AAF10813.1"/>
    <property type="molecule type" value="Genomic_DNA"/>
</dbReference>
<dbReference type="PIR" id="F75418">
    <property type="entry name" value="F75418"/>
</dbReference>
<dbReference type="RefSeq" id="NP_294964.1">
    <property type="nucleotide sequence ID" value="NC_001263.1"/>
</dbReference>
<dbReference type="RefSeq" id="WP_010887883.1">
    <property type="nucleotide sequence ID" value="NC_001263.1"/>
</dbReference>
<dbReference type="PDB" id="1SGJ">
    <property type="method" value="X-ray"/>
    <property type="resolution" value="1.84 A"/>
    <property type="chains" value="A/B/C=1-284"/>
</dbReference>
<dbReference type="PDBsum" id="1SGJ"/>
<dbReference type="SMR" id="Q9RUZ0"/>
<dbReference type="STRING" id="243230.DR_1240"/>
<dbReference type="DrugBank" id="DB02637">
    <property type="generic name" value="Oxaloacetate Ion"/>
</dbReference>
<dbReference type="PaxDb" id="243230-DR_1240"/>
<dbReference type="EnsemblBacteria" id="AAF10813">
    <property type="protein sequence ID" value="AAF10813"/>
    <property type="gene ID" value="DR_1240"/>
</dbReference>
<dbReference type="GeneID" id="69517486"/>
<dbReference type="KEGG" id="dra:DR_1240"/>
<dbReference type="PATRIC" id="fig|243230.17.peg.1435"/>
<dbReference type="eggNOG" id="COG2301">
    <property type="taxonomic scope" value="Bacteria"/>
</dbReference>
<dbReference type="HOGENOM" id="CLU_044864_0_2_0"/>
<dbReference type="InParanoid" id="Q9RUZ0"/>
<dbReference type="OrthoDB" id="9786940at2"/>
<dbReference type="EvolutionaryTrace" id="Q9RUZ0"/>
<dbReference type="Proteomes" id="UP000002524">
    <property type="component" value="Chromosome 1"/>
</dbReference>
<dbReference type="GO" id="GO:0016829">
    <property type="term" value="F:lyase activity"/>
    <property type="evidence" value="ECO:0007669"/>
    <property type="project" value="UniProtKB-KW"/>
</dbReference>
<dbReference type="GO" id="GO:0000287">
    <property type="term" value="F:magnesium ion binding"/>
    <property type="evidence" value="ECO:0000318"/>
    <property type="project" value="GO_Central"/>
</dbReference>
<dbReference type="GO" id="GO:0006107">
    <property type="term" value="P:oxaloacetate metabolic process"/>
    <property type="evidence" value="ECO:0000318"/>
    <property type="project" value="GO_Central"/>
</dbReference>
<dbReference type="Gene3D" id="3.20.20.60">
    <property type="entry name" value="Phosphoenolpyruvate-binding domains"/>
    <property type="match status" value="1"/>
</dbReference>
<dbReference type="InterPro" id="IPR005000">
    <property type="entry name" value="Aldolase/citrate-lyase_domain"/>
</dbReference>
<dbReference type="InterPro" id="IPR011206">
    <property type="entry name" value="Citrate_lyase_beta/mcl1/mcl2"/>
</dbReference>
<dbReference type="InterPro" id="IPR015813">
    <property type="entry name" value="Pyrv/PenolPyrv_kinase-like_dom"/>
</dbReference>
<dbReference type="InterPro" id="IPR040442">
    <property type="entry name" value="Pyrv_kinase-like_dom_sf"/>
</dbReference>
<dbReference type="PANTHER" id="PTHR32308:SF0">
    <property type="entry name" value="HPCH_HPAI ALDOLASE_CITRATE LYASE DOMAIN-CONTAINING PROTEIN"/>
    <property type="match status" value="1"/>
</dbReference>
<dbReference type="PANTHER" id="PTHR32308">
    <property type="entry name" value="LYASE BETA SUBUNIT, PUTATIVE (AFU_ORTHOLOGUE AFUA_4G13030)-RELATED"/>
    <property type="match status" value="1"/>
</dbReference>
<dbReference type="Pfam" id="PF03328">
    <property type="entry name" value="HpcH_HpaI"/>
    <property type="match status" value="1"/>
</dbReference>
<dbReference type="PIRSF" id="PIRSF015582">
    <property type="entry name" value="Cit_lyase_B"/>
    <property type="match status" value="1"/>
</dbReference>
<dbReference type="SUPFAM" id="SSF51621">
    <property type="entry name" value="Phosphoenolpyruvate/pyruvate domain"/>
    <property type="match status" value="1"/>
</dbReference>